<gene>
    <name type="primary">gmk</name>
    <name type="ordered locus">SCO1479</name>
    <name type="ORF">SC9C5.03c</name>
</gene>
<organism>
    <name type="scientific">Streptomyces coelicolor (strain ATCC BAA-471 / A3(2) / M145)</name>
    <dbReference type="NCBI Taxonomy" id="100226"/>
    <lineage>
        <taxon>Bacteria</taxon>
        <taxon>Bacillati</taxon>
        <taxon>Actinomycetota</taxon>
        <taxon>Actinomycetes</taxon>
        <taxon>Kitasatosporales</taxon>
        <taxon>Streptomycetaceae</taxon>
        <taxon>Streptomyces</taxon>
        <taxon>Streptomyces albidoflavus group</taxon>
    </lineage>
</organism>
<protein>
    <recommendedName>
        <fullName>Guanylate kinase</fullName>
        <ecNumber>2.7.4.8</ecNumber>
    </recommendedName>
    <alternativeName>
        <fullName>GMP kinase</fullName>
    </alternativeName>
</protein>
<name>KGUA_STRCO</name>
<proteinExistence type="inferred from homology"/>
<dbReference type="EC" id="2.7.4.8"/>
<dbReference type="EMBL" id="AL939109">
    <property type="protein sequence ID" value="CAB93359.1"/>
    <property type="molecule type" value="Genomic_DNA"/>
</dbReference>
<dbReference type="RefSeq" id="NP_625759.1">
    <property type="nucleotide sequence ID" value="NC_003888.3"/>
</dbReference>
<dbReference type="RefSeq" id="WP_003977347.1">
    <property type="nucleotide sequence ID" value="NZ_VNID01000021.1"/>
</dbReference>
<dbReference type="SMR" id="Q9KXS0"/>
<dbReference type="FunCoup" id="Q9KXS0">
    <property type="interactions" value="361"/>
</dbReference>
<dbReference type="STRING" id="100226.gene:17759065"/>
<dbReference type="PaxDb" id="100226-SCO1479"/>
<dbReference type="GeneID" id="96651670"/>
<dbReference type="KEGG" id="sco:SCO1479"/>
<dbReference type="PATRIC" id="fig|100226.15.peg.1488"/>
<dbReference type="eggNOG" id="COG0194">
    <property type="taxonomic scope" value="Bacteria"/>
</dbReference>
<dbReference type="HOGENOM" id="CLU_001715_1_1_11"/>
<dbReference type="InParanoid" id="Q9KXS0"/>
<dbReference type="OrthoDB" id="9808150at2"/>
<dbReference type="PhylomeDB" id="Q9KXS0"/>
<dbReference type="Proteomes" id="UP000001973">
    <property type="component" value="Chromosome"/>
</dbReference>
<dbReference type="GO" id="GO:0005829">
    <property type="term" value="C:cytosol"/>
    <property type="evidence" value="ECO:0000318"/>
    <property type="project" value="GO_Central"/>
</dbReference>
<dbReference type="GO" id="GO:0005524">
    <property type="term" value="F:ATP binding"/>
    <property type="evidence" value="ECO:0007669"/>
    <property type="project" value="UniProtKB-UniRule"/>
</dbReference>
<dbReference type="GO" id="GO:0004385">
    <property type="term" value="F:guanylate kinase activity"/>
    <property type="evidence" value="ECO:0000318"/>
    <property type="project" value="GO_Central"/>
</dbReference>
<dbReference type="CDD" id="cd00071">
    <property type="entry name" value="GMPK"/>
    <property type="match status" value="1"/>
</dbReference>
<dbReference type="FunFam" id="3.30.63.10:FF:000002">
    <property type="entry name" value="Guanylate kinase 1"/>
    <property type="match status" value="1"/>
</dbReference>
<dbReference type="Gene3D" id="3.30.63.10">
    <property type="entry name" value="Guanylate Kinase phosphate binding domain"/>
    <property type="match status" value="1"/>
</dbReference>
<dbReference type="Gene3D" id="3.40.50.300">
    <property type="entry name" value="P-loop containing nucleotide triphosphate hydrolases"/>
    <property type="match status" value="1"/>
</dbReference>
<dbReference type="HAMAP" id="MF_00328">
    <property type="entry name" value="Guanylate_kinase"/>
    <property type="match status" value="1"/>
</dbReference>
<dbReference type="InterPro" id="IPR008145">
    <property type="entry name" value="GK/Ca_channel_bsu"/>
</dbReference>
<dbReference type="InterPro" id="IPR008144">
    <property type="entry name" value="Guanylate_kin-like_dom"/>
</dbReference>
<dbReference type="InterPro" id="IPR017665">
    <property type="entry name" value="Guanylate_kinase"/>
</dbReference>
<dbReference type="InterPro" id="IPR020590">
    <property type="entry name" value="Guanylate_kinase_CS"/>
</dbReference>
<dbReference type="InterPro" id="IPR027417">
    <property type="entry name" value="P-loop_NTPase"/>
</dbReference>
<dbReference type="NCBIfam" id="TIGR03263">
    <property type="entry name" value="guanyl_kin"/>
    <property type="match status" value="1"/>
</dbReference>
<dbReference type="PANTHER" id="PTHR23117:SF13">
    <property type="entry name" value="GUANYLATE KINASE"/>
    <property type="match status" value="1"/>
</dbReference>
<dbReference type="PANTHER" id="PTHR23117">
    <property type="entry name" value="GUANYLATE KINASE-RELATED"/>
    <property type="match status" value="1"/>
</dbReference>
<dbReference type="Pfam" id="PF00625">
    <property type="entry name" value="Guanylate_kin"/>
    <property type="match status" value="1"/>
</dbReference>
<dbReference type="SMART" id="SM00072">
    <property type="entry name" value="GuKc"/>
    <property type="match status" value="1"/>
</dbReference>
<dbReference type="SUPFAM" id="SSF52540">
    <property type="entry name" value="P-loop containing nucleoside triphosphate hydrolases"/>
    <property type="match status" value="1"/>
</dbReference>
<dbReference type="PROSITE" id="PS00856">
    <property type="entry name" value="GUANYLATE_KINASE_1"/>
    <property type="match status" value="1"/>
</dbReference>
<dbReference type="PROSITE" id="PS50052">
    <property type="entry name" value="GUANYLATE_KINASE_2"/>
    <property type="match status" value="1"/>
</dbReference>
<sequence>MAATPRGTSPVPPDARPRLTVLSGPSGVGKSTVVAHMRKEHPEVWLSVSATTRRPRPGEQHGVHYFFVSDEEMDKLIANGELLEWAEFAGNRYGTPRTAVLERLEAGEPVLLEIDLQGARQVRESMPEARLVFLAPPSWDELVRRLTGRGTEPPEVIERRLAAAKVELAAEPEFDQTLVNTSVEDVARELLALTNVV</sequence>
<accession>Q9KXS0</accession>
<reference key="1">
    <citation type="journal article" date="2002" name="Nature">
        <title>Complete genome sequence of the model actinomycete Streptomyces coelicolor A3(2).</title>
        <authorList>
            <person name="Bentley S.D."/>
            <person name="Chater K.F."/>
            <person name="Cerdeno-Tarraga A.-M."/>
            <person name="Challis G.L."/>
            <person name="Thomson N.R."/>
            <person name="James K.D."/>
            <person name="Harris D.E."/>
            <person name="Quail M.A."/>
            <person name="Kieser H."/>
            <person name="Harper D."/>
            <person name="Bateman A."/>
            <person name="Brown S."/>
            <person name="Chandra G."/>
            <person name="Chen C.W."/>
            <person name="Collins M."/>
            <person name="Cronin A."/>
            <person name="Fraser A."/>
            <person name="Goble A."/>
            <person name="Hidalgo J."/>
            <person name="Hornsby T."/>
            <person name="Howarth S."/>
            <person name="Huang C.-H."/>
            <person name="Kieser T."/>
            <person name="Larke L."/>
            <person name="Murphy L.D."/>
            <person name="Oliver K."/>
            <person name="O'Neil S."/>
            <person name="Rabbinowitsch E."/>
            <person name="Rajandream M.A."/>
            <person name="Rutherford K.M."/>
            <person name="Rutter S."/>
            <person name="Seeger K."/>
            <person name="Saunders D."/>
            <person name="Sharp S."/>
            <person name="Squares R."/>
            <person name="Squares S."/>
            <person name="Taylor K."/>
            <person name="Warren T."/>
            <person name="Wietzorrek A."/>
            <person name="Woodward J.R."/>
            <person name="Barrell B.G."/>
            <person name="Parkhill J."/>
            <person name="Hopwood D.A."/>
        </authorList>
    </citation>
    <scope>NUCLEOTIDE SEQUENCE [LARGE SCALE GENOMIC DNA]</scope>
    <source>
        <strain>ATCC BAA-471 / A3(2) / M145</strain>
    </source>
</reference>
<evidence type="ECO:0000250" key="1"/>
<evidence type="ECO:0000256" key="2">
    <source>
        <dbReference type="SAM" id="MobiDB-lite"/>
    </source>
</evidence>
<evidence type="ECO:0000305" key="3"/>
<keyword id="KW-0067">ATP-binding</keyword>
<keyword id="KW-0963">Cytoplasm</keyword>
<keyword id="KW-0418">Kinase</keyword>
<keyword id="KW-0547">Nucleotide-binding</keyword>
<keyword id="KW-1185">Reference proteome</keyword>
<keyword id="KW-0808">Transferase</keyword>
<feature type="chain" id="PRO_0000170615" description="Guanylate kinase">
    <location>
        <begin position="1"/>
        <end position="197"/>
    </location>
</feature>
<feature type="domain" description="Guanylate kinase-like">
    <location>
        <begin position="17"/>
        <end position="197"/>
    </location>
</feature>
<feature type="region of interest" description="Disordered" evidence="2">
    <location>
        <begin position="1"/>
        <end position="30"/>
    </location>
</feature>
<feature type="binding site" evidence="1">
    <location>
        <begin position="24"/>
        <end position="31"/>
    </location>
    <ligand>
        <name>ATP</name>
        <dbReference type="ChEBI" id="CHEBI:30616"/>
    </ligand>
</feature>
<comment type="function">
    <text evidence="1">Essential for recycling GMP and indirectly, cGMP.</text>
</comment>
<comment type="catalytic activity">
    <reaction>
        <text>GMP + ATP = GDP + ADP</text>
        <dbReference type="Rhea" id="RHEA:20780"/>
        <dbReference type="ChEBI" id="CHEBI:30616"/>
        <dbReference type="ChEBI" id="CHEBI:58115"/>
        <dbReference type="ChEBI" id="CHEBI:58189"/>
        <dbReference type="ChEBI" id="CHEBI:456216"/>
        <dbReference type="EC" id="2.7.4.8"/>
    </reaction>
</comment>
<comment type="subcellular location">
    <subcellularLocation>
        <location evidence="1">Cytoplasm</location>
    </subcellularLocation>
</comment>
<comment type="similarity">
    <text evidence="3">Belongs to the guanylate kinase family.</text>
</comment>